<reference key="1">
    <citation type="journal article" date="2009" name="BMC Genomics">
        <title>Pseudogene accumulation in the evolutionary histories of Salmonella enterica serovars Paratyphi A and Typhi.</title>
        <authorList>
            <person name="Holt K.E."/>
            <person name="Thomson N.R."/>
            <person name="Wain J."/>
            <person name="Langridge G.C."/>
            <person name="Hasan R."/>
            <person name="Bhutta Z.A."/>
            <person name="Quail M.A."/>
            <person name="Norbertczak H."/>
            <person name="Walker D."/>
            <person name="Simmonds M."/>
            <person name="White B."/>
            <person name="Bason N."/>
            <person name="Mungall K."/>
            <person name="Dougan G."/>
            <person name="Parkhill J."/>
        </authorList>
    </citation>
    <scope>NUCLEOTIDE SEQUENCE [LARGE SCALE GENOMIC DNA]</scope>
    <source>
        <strain>AKU_12601</strain>
    </source>
</reference>
<proteinExistence type="inferred from homology"/>
<sequence>MTPEHLPTEQYEAQLAEKVARLQSMMAPFSGLVPEVFRSPVSHYRMRAEFRLWHDGDDLYHIMFDQQTKSRIRVDTFPAASQLINTLMKAMIAGVRDNHALRHKLFQIDYLTTLSNQAVVSLLYHKKLDEEWREAATALRDALRAQGLNVHLIGRATKTKIELDQDYIDERLPVAGKEIIYRQVENSFTQPNAAMNIQMLEWALEVTKDSKGDLLELYCGNGNFSLALARNFNRVLATEIAKPSVAAAQYNIAANHIDNVQIIRMAAEEFTQAMNGVREFNRLQGIDLKRYQCETIFVDPPRSGLDSETEKMVQAYPRILYISCNPETLCKNLETLSQTHTVSRLALFDQFPYTHHMECGVLLTAR</sequence>
<feature type="chain" id="PRO_1000198556" description="tRNA/tmRNA (uracil-C(5))-methyltransferase">
    <location>
        <begin position="1"/>
        <end position="366"/>
    </location>
</feature>
<feature type="active site" description="Nucleophile" evidence="1">
    <location>
        <position position="324"/>
    </location>
</feature>
<feature type="active site" description="Proton acceptor" evidence="1">
    <location>
        <position position="358"/>
    </location>
</feature>
<feature type="binding site" evidence="1">
    <location>
        <position position="190"/>
    </location>
    <ligand>
        <name>S-adenosyl-L-methionine</name>
        <dbReference type="ChEBI" id="CHEBI:59789"/>
    </ligand>
</feature>
<feature type="binding site" evidence="1">
    <location>
        <position position="218"/>
    </location>
    <ligand>
        <name>S-adenosyl-L-methionine</name>
        <dbReference type="ChEBI" id="CHEBI:59789"/>
    </ligand>
</feature>
<feature type="binding site" evidence="1">
    <location>
        <position position="223"/>
    </location>
    <ligand>
        <name>S-adenosyl-L-methionine</name>
        <dbReference type="ChEBI" id="CHEBI:59789"/>
    </ligand>
</feature>
<feature type="binding site" evidence="1">
    <location>
        <position position="239"/>
    </location>
    <ligand>
        <name>S-adenosyl-L-methionine</name>
        <dbReference type="ChEBI" id="CHEBI:59789"/>
    </ligand>
</feature>
<feature type="binding site" evidence="1">
    <location>
        <position position="299"/>
    </location>
    <ligand>
        <name>S-adenosyl-L-methionine</name>
        <dbReference type="ChEBI" id="CHEBI:59789"/>
    </ligand>
</feature>
<organism>
    <name type="scientific">Salmonella paratyphi A (strain AKU_12601)</name>
    <dbReference type="NCBI Taxonomy" id="554290"/>
    <lineage>
        <taxon>Bacteria</taxon>
        <taxon>Pseudomonadati</taxon>
        <taxon>Pseudomonadota</taxon>
        <taxon>Gammaproteobacteria</taxon>
        <taxon>Enterobacterales</taxon>
        <taxon>Enterobacteriaceae</taxon>
        <taxon>Salmonella</taxon>
    </lineage>
</organism>
<name>TRMA_SALPK</name>
<dbReference type="EC" id="2.1.1.-" evidence="1"/>
<dbReference type="EC" id="2.1.1.35" evidence="1"/>
<dbReference type="EMBL" id="FM200053">
    <property type="protein sequence ID" value="CAR61975.1"/>
    <property type="molecule type" value="Genomic_DNA"/>
</dbReference>
<dbReference type="RefSeq" id="WP_000186976.1">
    <property type="nucleotide sequence ID" value="NC_011147.1"/>
</dbReference>
<dbReference type="SMR" id="B5BJN9"/>
<dbReference type="KEGG" id="sek:SSPA3692"/>
<dbReference type="HOGENOM" id="CLU_043022_0_0_6"/>
<dbReference type="Proteomes" id="UP000001869">
    <property type="component" value="Chromosome"/>
</dbReference>
<dbReference type="GO" id="GO:0005829">
    <property type="term" value="C:cytosol"/>
    <property type="evidence" value="ECO:0007669"/>
    <property type="project" value="TreeGrafter"/>
</dbReference>
<dbReference type="GO" id="GO:0019843">
    <property type="term" value="F:rRNA binding"/>
    <property type="evidence" value="ECO:0007669"/>
    <property type="project" value="TreeGrafter"/>
</dbReference>
<dbReference type="GO" id="GO:0030697">
    <property type="term" value="F:tRNA (uracil(54)-C5)-methyltransferase activity, S-adenosyl methionine-dependent"/>
    <property type="evidence" value="ECO:0007669"/>
    <property type="project" value="UniProtKB-UniRule"/>
</dbReference>
<dbReference type="GO" id="GO:0000049">
    <property type="term" value="F:tRNA binding"/>
    <property type="evidence" value="ECO:0007669"/>
    <property type="project" value="TreeGrafter"/>
</dbReference>
<dbReference type="GO" id="GO:0030488">
    <property type="term" value="P:tRNA methylation"/>
    <property type="evidence" value="ECO:0007669"/>
    <property type="project" value="UniProtKB-UniRule"/>
</dbReference>
<dbReference type="CDD" id="cd02440">
    <property type="entry name" value="AdoMet_MTases"/>
    <property type="match status" value="1"/>
</dbReference>
<dbReference type="FunFam" id="2.40.50.1070:FF:000001">
    <property type="entry name" value="tRNA/tmRNA (uracil-C(5))-methyltransferase"/>
    <property type="match status" value="1"/>
</dbReference>
<dbReference type="FunFam" id="3.40.50.150:FF:000012">
    <property type="entry name" value="tRNA/tmRNA (uracil-C(5))-methyltransferase"/>
    <property type="match status" value="1"/>
</dbReference>
<dbReference type="Gene3D" id="2.40.50.1070">
    <property type="match status" value="1"/>
</dbReference>
<dbReference type="Gene3D" id="3.40.50.150">
    <property type="entry name" value="Vaccinia Virus protein VP39"/>
    <property type="match status" value="1"/>
</dbReference>
<dbReference type="HAMAP" id="MF_01011">
    <property type="entry name" value="RNA_methyltr_TrmA"/>
    <property type="match status" value="1"/>
</dbReference>
<dbReference type="InterPro" id="IPR030390">
    <property type="entry name" value="MeTrfase_TrmA_AS"/>
</dbReference>
<dbReference type="InterPro" id="IPR030391">
    <property type="entry name" value="MeTrfase_TrmA_CS"/>
</dbReference>
<dbReference type="InterPro" id="IPR029063">
    <property type="entry name" value="SAM-dependent_MTases_sf"/>
</dbReference>
<dbReference type="InterPro" id="IPR011869">
    <property type="entry name" value="TrmA_MeTrfase"/>
</dbReference>
<dbReference type="InterPro" id="IPR010280">
    <property type="entry name" value="U5_MeTrfase_fam"/>
</dbReference>
<dbReference type="NCBIfam" id="TIGR02143">
    <property type="entry name" value="trmA_only"/>
    <property type="match status" value="1"/>
</dbReference>
<dbReference type="PANTHER" id="PTHR47790">
    <property type="entry name" value="TRNA/TMRNA (URACIL-C(5))-METHYLTRANSFERASE"/>
    <property type="match status" value="1"/>
</dbReference>
<dbReference type="PANTHER" id="PTHR47790:SF2">
    <property type="entry name" value="TRNA_TMRNA (URACIL-C(5))-METHYLTRANSFERASE"/>
    <property type="match status" value="1"/>
</dbReference>
<dbReference type="Pfam" id="PF05958">
    <property type="entry name" value="tRNA_U5-meth_tr"/>
    <property type="match status" value="1"/>
</dbReference>
<dbReference type="SUPFAM" id="SSF53335">
    <property type="entry name" value="S-adenosyl-L-methionine-dependent methyltransferases"/>
    <property type="match status" value="1"/>
</dbReference>
<dbReference type="PROSITE" id="PS51687">
    <property type="entry name" value="SAM_MT_RNA_M5U"/>
    <property type="match status" value="1"/>
</dbReference>
<dbReference type="PROSITE" id="PS01230">
    <property type="entry name" value="TRMA_1"/>
    <property type="match status" value="1"/>
</dbReference>
<dbReference type="PROSITE" id="PS01231">
    <property type="entry name" value="TRMA_2"/>
    <property type="match status" value="1"/>
</dbReference>
<protein>
    <recommendedName>
        <fullName evidence="1">tRNA/tmRNA (uracil-C(5))-methyltransferase</fullName>
        <ecNumber evidence="1">2.1.1.-</ecNumber>
        <ecNumber evidence="1">2.1.1.35</ecNumber>
    </recommendedName>
    <alternativeName>
        <fullName evidence="1">tRNA (uracil(54)-C(5))-methyltransferase</fullName>
    </alternativeName>
    <alternativeName>
        <fullName evidence="1">tRNA(m5U54)-methyltransferase</fullName>
        <shortName evidence="1">RUMT</shortName>
    </alternativeName>
    <alternativeName>
        <fullName evidence="1">tmRNA (uracil(341)-C(5))-methyltransferase</fullName>
    </alternativeName>
</protein>
<comment type="function">
    <text evidence="1">Dual-specificity methyltransferase that catalyzes the formation of 5-methyluridine at position 54 (m5U54) in all tRNAs, and that of position 341 (m5U341) in tmRNA (transfer-mRNA).</text>
</comment>
<comment type="catalytic activity">
    <reaction evidence="1">
        <text>uridine(54) in tRNA + S-adenosyl-L-methionine = 5-methyluridine(54) in tRNA + S-adenosyl-L-homocysteine + H(+)</text>
        <dbReference type="Rhea" id="RHEA:42712"/>
        <dbReference type="Rhea" id="RHEA-COMP:10167"/>
        <dbReference type="Rhea" id="RHEA-COMP:10193"/>
        <dbReference type="ChEBI" id="CHEBI:15378"/>
        <dbReference type="ChEBI" id="CHEBI:57856"/>
        <dbReference type="ChEBI" id="CHEBI:59789"/>
        <dbReference type="ChEBI" id="CHEBI:65315"/>
        <dbReference type="ChEBI" id="CHEBI:74447"/>
        <dbReference type="EC" id="2.1.1.35"/>
    </reaction>
</comment>
<comment type="catalytic activity">
    <reaction evidence="1">
        <text>uridine(341) in tmRNA + S-adenosyl-L-methionine = 5-methyluridine(341) in tmRNA + S-adenosyl-L-homocysteine + H(+)</text>
        <dbReference type="Rhea" id="RHEA:43612"/>
        <dbReference type="Rhea" id="RHEA-COMP:10630"/>
        <dbReference type="Rhea" id="RHEA-COMP:10631"/>
        <dbReference type="ChEBI" id="CHEBI:15378"/>
        <dbReference type="ChEBI" id="CHEBI:57856"/>
        <dbReference type="ChEBI" id="CHEBI:59789"/>
        <dbReference type="ChEBI" id="CHEBI:65315"/>
        <dbReference type="ChEBI" id="CHEBI:74447"/>
    </reaction>
</comment>
<comment type="similarity">
    <text evidence="1">Belongs to the class I-like SAM-binding methyltransferase superfamily. RNA M5U methyltransferase family. TrmA subfamily.</text>
</comment>
<keyword id="KW-0489">Methyltransferase</keyword>
<keyword id="KW-0949">S-adenosyl-L-methionine</keyword>
<keyword id="KW-0808">Transferase</keyword>
<keyword id="KW-0819">tRNA processing</keyword>
<accession>B5BJN9</accession>
<gene>
    <name evidence="1" type="primary">trmA</name>
    <name type="ordered locus">SSPA3692</name>
</gene>
<evidence type="ECO:0000255" key="1">
    <source>
        <dbReference type="HAMAP-Rule" id="MF_01011"/>
    </source>
</evidence>